<comment type="function">
    <text evidence="1">Phosphorylation of dTMP to form dTDP in both de novo and salvage pathways of dTTP synthesis.</text>
</comment>
<comment type="catalytic activity">
    <reaction evidence="1">
        <text>dTMP + ATP = dTDP + ADP</text>
        <dbReference type="Rhea" id="RHEA:13517"/>
        <dbReference type="ChEBI" id="CHEBI:30616"/>
        <dbReference type="ChEBI" id="CHEBI:58369"/>
        <dbReference type="ChEBI" id="CHEBI:63528"/>
        <dbReference type="ChEBI" id="CHEBI:456216"/>
        <dbReference type="EC" id="2.7.4.9"/>
    </reaction>
</comment>
<comment type="similarity">
    <text evidence="1">Belongs to the thymidylate kinase family.</text>
</comment>
<gene>
    <name evidence="1" type="primary">tmk</name>
    <name type="ordered locus">Ppha_1611</name>
</gene>
<accession>B4SAG3</accession>
<proteinExistence type="inferred from homology"/>
<protein>
    <recommendedName>
        <fullName evidence="1">Thymidylate kinase</fullName>
        <ecNumber evidence="1">2.7.4.9</ecNumber>
    </recommendedName>
    <alternativeName>
        <fullName evidence="1">dTMP kinase</fullName>
    </alternativeName>
</protein>
<sequence length="217" mass="24105">MLITFEGIDGAGKSTQIKELVHALGLQGIEAVVLREPGGTTVAEKIRQILLESSHGITPVGELLLFSASRAELVQEVIRPALASGKTIILDRFFDSTTAYQGYGRGIDMELLRSIIAISTCGITPDITFYLDLEPEEALKRKYSKTSIPLAFEGEELDRMERSGLEFYRNVRRGYLDIKQLENRRFVQLNALDPVAVIHGKILALLGERFPSFLNPV</sequence>
<reference key="1">
    <citation type="submission" date="2008-06" db="EMBL/GenBank/DDBJ databases">
        <title>Complete sequence of Pelodictyon phaeoclathratiforme BU-1.</title>
        <authorList>
            <consortium name="US DOE Joint Genome Institute"/>
            <person name="Lucas S."/>
            <person name="Copeland A."/>
            <person name="Lapidus A."/>
            <person name="Glavina del Rio T."/>
            <person name="Dalin E."/>
            <person name="Tice H."/>
            <person name="Bruce D."/>
            <person name="Goodwin L."/>
            <person name="Pitluck S."/>
            <person name="Schmutz J."/>
            <person name="Larimer F."/>
            <person name="Land M."/>
            <person name="Hauser L."/>
            <person name="Kyrpides N."/>
            <person name="Mikhailova N."/>
            <person name="Liu Z."/>
            <person name="Li T."/>
            <person name="Zhao F."/>
            <person name="Overmann J."/>
            <person name="Bryant D.A."/>
            <person name="Richardson P."/>
        </authorList>
    </citation>
    <scope>NUCLEOTIDE SEQUENCE [LARGE SCALE GENOMIC DNA]</scope>
    <source>
        <strain>DSM 5477 / BU-1</strain>
    </source>
</reference>
<keyword id="KW-0067">ATP-binding</keyword>
<keyword id="KW-0418">Kinase</keyword>
<keyword id="KW-0545">Nucleotide biosynthesis</keyword>
<keyword id="KW-0547">Nucleotide-binding</keyword>
<keyword id="KW-1185">Reference proteome</keyword>
<keyword id="KW-0808">Transferase</keyword>
<dbReference type="EC" id="2.7.4.9" evidence="1"/>
<dbReference type="EMBL" id="CP001110">
    <property type="protein sequence ID" value="ACF43849.1"/>
    <property type="molecule type" value="Genomic_DNA"/>
</dbReference>
<dbReference type="RefSeq" id="WP_012508336.1">
    <property type="nucleotide sequence ID" value="NC_011060.1"/>
</dbReference>
<dbReference type="SMR" id="B4SAG3"/>
<dbReference type="STRING" id="324925.Ppha_1611"/>
<dbReference type="KEGG" id="pph:Ppha_1611"/>
<dbReference type="eggNOG" id="COG0125">
    <property type="taxonomic scope" value="Bacteria"/>
</dbReference>
<dbReference type="HOGENOM" id="CLU_049131_0_2_10"/>
<dbReference type="OrthoDB" id="9774907at2"/>
<dbReference type="Proteomes" id="UP000002724">
    <property type="component" value="Chromosome"/>
</dbReference>
<dbReference type="GO" id="GO:0005829">
    <property type="term" value="C:cytosol"/>
    <property type="evidence" value="ECO:0007669"/>
    <property type="project" value="TreeGrafter"/>
</dbReference>
<dbReference type="GO" id="GO:0005524">
    <property type="term" value="F:ATP binding"/>
    <property type="evidence" value="ECO:0007669"/>
    <property type="project" value="UniProtKB-UniRule"/>
</dbReference>
<dbReference type="GO" id="GO:0004798">
    <property type="term" value="F:dTMP kinase activity"/>
    <property type="evidence" value="ECO:0007669"/>
    <property type="project" value="UniProtKB-UniRule"/>
</dbReference>
<dbReference type="GO" id="GO:0006233">
    <property type="term" value="P:dTDP biosynthetic process"/>
    <property type="evidence" value="ECO:0007669"/>
    <property type="project" value="InterPro"/>
</dbReference>
<dbReference type="GO" id="GO:0006235">
    <property type="term" value="P:dTTP biosynthetic process"/>
    <property type="evidence" value="ECO:0007669"/>
    <property type="project" value="UniProtKB-UniRule"/>
</dbReference>
<dbReference type="GO" id="GO:0006227">
    <property type="term" value="P:dUDP biosynthetic process"/>
    <property type="evidence" value="ECO:0007669"/>
    <property type="project" value="TreeGrafter"/>
</dbReference>
<dbReference type="CDD" id="cd01672">
    <property type="entry name" value="TMPK"/>
    <property type="match status" value="1"/>
</dbReference>
<dbReference type="FunFam" id="3.40.50.300:FF:000225">
    <property type="entry name" value="Thymidylate kinase"/>
    <property type="match status" value="1"/>
</dbReference>
<dbReference type="Gene3D" id="3.40.50.300">
    <property type="entry name" value="P-loop containing nucleotide triphosphate hydrolases"/>
    <property type="match status" value="1"/>
</dbReference>
<dbReference type="HAMAP" id="MF_00165">
    <property type="entry name" value="Thymidylate_kinase"/>
    <property type="match status" value="1"/>
</dbReference>
<dbReference type="InterPro" id="IPR027417">
    <property type="entry name" value="P-loop_NTPase"/>
</dbReference>
<dbReference type="InterPro" id="IPR039430">
    <property type="entry name" value="Thymidylate_kin-like_dom"/>
</dbReference>
<dbReference type="InterPro" id="IPR018095">
    <property type="entry name" value="Thymidylate_kin_CS"/>
</dbReference>
<dbReference type="InterPro" id="IPR018094">
    <property type="entry name" value="Thymidylate_kinase"/>
</dbReference>
<dbReference type="NCBIfam" id="TIGR00041">
    <property type="entry name" value="DTMP_kinase"/>
    <property type="match status" value="1"/>
</dbReference>
<dbReference type="PANTHER" id="PTHR10344">
    <property type="entry name" value="THYMIDYLATE KINASE"/>
    <property type="match status" value="1"/>
</dbReference>
<dbReference type="PANTHER" id="PTHR10344:SF4">
    <property type="entry name" value="UMP-CMP KINASE 2, MITOCHONDRIAL"/>
    <property type="match status" value="1"/>
</dbReference>
<dbReference type="Pfam" id="PF02223">
    <property type="entry name" value="Thymidylate_kin"/>
    <property type="match status" value="1"/>
</dbReference>
<dbReference type="SUPFAM" id="SSF52540">
    <property type="entry name" value="P-loop containing nucleoside triphosphate hydrolases"/>
    <property type="match status" value="1"/>
</dbReference>
<dbReference type="PROSITE" id="PS01331">
    <property type="entry name" value="THYMIDYLATE_KINASE"/>
    <property type="match status" value="1"/>
</dbReference>
<feature type="chain" id="PRO_1000097417" description="Thymidylate kinase">
    <location>
        <begin position="1"/>
        <end position="217"/>
    </location>
</feature>
<feature type="binding site" evidence="1">
    <location>
        <begin position="7"/>
        <end position="14"/>
    </location>
    <ligand>
        <name>ATP</name>
        <dbReference type="ChEBI" id="CHEBI:30616"/>
    </ligand>
</feature>
<organism>
    <name type="scientific">Pelodictyon phaeoclathratiforme (strain DSM 5477 / BU-1)</name>
    <dbReference type="NCBI Taxonomy" id="324925"/>
    <lineage>
        <taxon>Bacteria</taxon>
        <taxon>Pseudomonadati</taxon>
        <taxon>Chlorobiota</taxon>
        <taxon>Chlorobiia</taxon>
        <taxon>Chlorobiales</taxon>
        <taxon>Chlorobiaceae</taxon>
        <taxon>Chlorobium/Pelodictyon group</taxon>
        <taxon>Pelodictyon</taxon>
    </lineage>
</organism>
<name>KTHY_PELPB</name>
<evidence type="ECO:0000255" key="1">
    <source>
        <dbReference type="HAMAP-Rule" id="MF_00165"/>
    </source>
</evidence>